<keyword id="KW-0963">Cytoplasm</keyword>
<keyword id="KW-0413">Isomerase</keyword>
<keyword id="KW-0627">Porphyrin biosynthesis</keyword>
<keyword id="KW-0663">Pyridoxal phosphate</keyword>
<gene>
    <name evidence="1" type="primary">hemL</name>
    <name type="ordered locus">LBJ_4011</name>
</gene>
<proteinExistence type="inferred from homology"/>
<sequence length="441" mass="48001">MSQRSSELISDSWKGSSSEELFERAKIVSPGGVHSPVRSFRSVGGTPVFFVSANGATLTDVSGKEYVDFCLSFGPLILGHRDPEVEEVVRETAGLAWSFGTAEPYSLELAEFITNRIPWAEKVRFVNSGTEAVMSALRVTRAATGREKIFKFDGCYHGHLDALLVKAGSGLAGESSSDSAGISSTAIANTLVLPLDDEMAVQKLFESEGKNIAALIIEPLPANYGLLVQRKEFLLKIVEIAKKYGTLVVFDEVISGFRTGFQGMSGLLGIRPDLVTYGKIIGGGFPVGCYAGRRDLLDLVAPSGPVYQAGTLSANPFGMRAGLATLKKAERDSIYSVLEVRTKTFADEMVKLLNGKTDQEWEAVTHSSLFWFRKKTQQAVRRIDQIPEGHKEGFAEVFHVLLKNGIYLAPSGYEVGFLSWAHNDSVIAKVLEIADKAFKEL</sequence>
<reference key="1">
    <citation type="journal article" date="2006" name="Proc. Natl. Acad. Sci. U.S.A.">
        <title>Genome reduction in Leptospira borgpetersenii reflects limited transmission potential.</title>
        <authorList>
            <person name="Bulach D.M."/>
            <person name="Zuerner R.L."/>
            <person name="Wilson P."/>
            <person name="Seemann T."/>
            <person name="McGrath A."/>
            <person name="Cullen P.A."/>
            <person name="Davis J."/>
            <person name="Johnson M."/>
            <person name="Kuczek E."/>
            <person name="Alt D.P."/>
            <person name="Peterson-Burch B."/>
            <person name="Coppel R.L."/>
            <person name="Rood J.I."/>
            <person name="Davies J.K."/>
            <person name="Adler B."/>
        </authorList>
    </citation>
    <scope>NUCLEOTIDE SEQUENCE [LARGE SCALE GENOMIC DNA]</scope>
    <source>
        <strain>JB197</strain>
    </source>
</reference>
<protein>
    <recommendedName>
        <fullName evidence="1">Glutamate-1-semialdehyde 2,1-aminomutase</fullName>
        <shortName evidence="1">GSA</shortName>
        <ecNumber evidence="1">5.4.3.8</ecNumber>
    </recommendedName>
    <alternativeName>
        <fullName evidence="1">Glutamate-1-semialdehyde aminotransferase</fullName>
        <shortName evidence="1">GSA-AT</shortName>
    </alternativeName>
</protein>
<comment type="catalytic activity">
    <reaction evidence="1">
        <text>(S)-4-amino-5-oxopentanoate = 5-aminolevulinate</text>
        <dbReference type="Rhea" id="RHEA:14265"/>
        <dbReference type="ChEBI" id="CHEBI:57501"/>
        <dbReference type="ChEBI" id="CHEBI:356416"/>
        <dbReference type="EC" id="5.4.3.8"/>
    </reaction>
</comment>
<comment type="cofactor">
    <cofactor evidence="1">
        <name>pyridoxal 5'-phosphate</name>
        <dbReference type="ChEBI" id="CHEBI:597326"/>
    </cofactor>
</comment>
<comment type="pathway">
    <text evidence="1">Porphyrin-containing compound metabolism; protoporphyrin-IX biosynthesis; 5-aminolevulinate from L-glutamyl-tRNA(Glu): step 2/2.</text>
</comment>
<comment type="subunit">
    <text evidence="1">Homodimer.</text>
</comment>
<comment type="subcellular location">
    <subcellularLocation>
        <location evidence="1">Cytoplasm</location>
    </subcellularLocation>
</comment>
<comment type="similarity">
    <text evidence="1">Belongs to the class-III pyridoxal-phosphate-dependent aminotransferase family. HemL subfamily.</text>
</comment>
<organism>
    <name type="scientific">Leptospira borgpetersenii serovar Hardjo-bovis (strain JB197)</name>
    <dbReference type="NCBI Taxonomy" id="355277"/>
    <lineage>
        <taxon>Bacteria</taxon>
        <taxon>Pseudomonadati</taxon>
        <taxon>Spirochaetota</taxon>
        <taxon>Spirochaetia</taxon>
        <taxon>Leptospirales</taxon>
        <taxon>Leptospiraceae</taxon>
        <taxon>Leptospira</taxon>
    </lineage>
</organism>
<name>GSA_LEPBJ</name>
<accession>Q04NV4</accession>
<feature type="chain" id="PRO_0000382328" description="Glutamate-1-semialdehyde 2,1-aminomutase">
    <location>
        <begin position="1"/>
        <end position="441"/>
    </location>
</feature>
<feature type="modified residue" description="N6-(pyridoxal phosphate)lysine" evidence="1">
    <location>
        <position position="279"/>
    </location>
</feature>
<evidence type="ECO:0000255" key="1">
    <source>
        <dbReference type="HAMAP-Rule" id="MF_00375"/>
    </source>
</evidence>
<dbReference type="EC" id="5.4.3.8" evidence="1"/>
<dbReference type="EMBL" id="CP000351">
    <property type="protein sequence ID" value="ABJ77416.1"/>
    <property type="molecule type" value="Genomic_DNA"/>
</dbReference>
<dbReference type="RefSeq" id="WP_011671243.1">
    <property type="nucleotide sequence ID" value="NC_008511.1"/>
</dbReference>
<dbReference type="SMR" id="Q04NV4"/>
<dbReference type="KEGG" id="lbj:LBJ_4011"/>
<dbReference type="HOGENOM" id="CLU_016922_1_5_12"/>
<dbReference type="UniPathway" id="UPA00251">
    <property type="reaction ID" value="UER00317"/>
</dbReference>
<dbReference type="Proteomes" id="UP000000656">
    <property type="component" value="Chromosome 2"/>
</dbReference>
<dbReference type="GO" id="GO:0005737">
    <property type="term" value="C:cytoplasm"/>
    <property type="evidence" value="ECO:0007669"/>
    <property type="project" value="UniProtKB-SubCell"/>
</dbReference>
<dbReference type="GO" id="GO:0042286">
    <property type="term" value="F:glutamate-1-semialdehyde 2,1-aminomutase activity"/>
    <property type="evidence" value="ECO:0007669"/>
    <property type="project" value="UniProtKB-UniRule"/>
</dbReference>
<dbReference type="GO" id="GO:0030170">
    <property type="term" value="F:pyridoxal phosphate binding"/>
    <property type="evidence" value="ECO:0007669"/>
    <property type="project" value="InterPro"/>
</dbReference>
<dbReference type="GO" id="GO:0008483">
    <property type="term" value="F:transaminase activity"/>
    <property type="evidence" value="ECO:0007669"/>
    <property type="project" value="InterPro"/>
</dbReference>
<dbReference type="GO" id="GO:0006782">
    <property type="term" value="P:protoporphyrinogen IX biosynthetic process"/>
    <property type="evidence" value="ECO:0007669"/>
    <property type="project" value="UniProtKB-UniRule"/>
</dbReference>
<dbReference type="CDD" id="cd00610">
    <property type="entry name" value="OAT_like"/>
    <property type="match status" value="1"/>
</dbReference>
<dbReference type="FunFam" id="3.40.640.10:FF:000021">
    <property type="entry name" value="Glutamate-1-semialdehyde 2,1-aminomutase"/>
    <property type="match status" value="1"/>
</dbReference>
<dbReference type="Gene3D" id="3.90.1150.10">
    <property type="entry name" value="Aspartate Aminotransferase, domain 1"/>
    <property type="match status" value="1"/>
</dbReference>
<dbReference type="Gene3D" id="3.40.640.10">
    <property type="entry name" value="Type I PLP-dependent aspartate aminotransferase-like (Major domain)"/>
    <property type="match status" value="1"/>
</dbReference>
<dbReference type="HAMAP" id="MF_00375">
    <property type="entry name" value="HemL_aminotrans_3"/>
    <property type="match status" value="1"/>
</dbReference>
<dbReference type="InterPro" id="IPR004639">
    <property type="entry name" value="4pyrrol_synth_GluAld_NH2Trfase"/>
</dbReference>
<dbReference type="InterPro" id="IPR005814">
    <property type="entry name" value="Aminotrans_3"/>
</dbReference>
<dbReference type="InterPro" id="IPR049704">
    <property type="entry name" value="Aminotrans_3_PPA_site"/>
</dbReference>
<dbReference type="InterPro" id="IPR015424">
    <property type="entry name" value="PyrdxlP-dep_Trfase"/>
</dbReference>
<dbReference type="InterPro" id="IPR015421">
    <property type="entry name" value="PyrdxlP-dep_Trfase_major"/>
</dbReference>
<dbReference type="InterPro" id="IPR015422">
    <property type="entry name" value="PyrdxlP-dep_Trfase_small"/>
</dbReference>
<dbReference type="NCBIfam" id="NF000818">
    <property type="entry name" value="PRK00062.1"/>
    <property type="match status" value="1"/>
</dbReference>
<dbReference type="PANTHER" id="PTHR43713">
    <property type="entry name" value="GLUTAMATE-1-SEMIALDEHYDE 2,1-AMINOMUTASE"/>
    <property type="match status" value="1"/>
</dbReference>
<dbReference type="PANTHER" id="PTHR43713:SF3">
    <property type="entry name" value="GLUTAMATE-1-SEMIALDEHYDE 2,1-AMINOMUTASE 1, CHLOROPLASTIC-RELATED"/>
    <property type="match status" value="1"/>
</dbReference>
<dbReference type="Pfam" id="PF00202">
    <property type="entry name" value="Aminotran_3"/>
    <property type="match status" value="1"/>
</dbReference>
<dbReference type="SUPFAM" id="SSF53383">
    <property type="entry name" value="PLP-dependent transferases"/>
    <property type="match status" value="1"/>
</dbReference>
<dbReference type="PROSITE" id="PS00600">
    <property type="entry name" value="AA_TRANSFER_CLASS_3"/>
    <property type="match status" value="1"/>
</dbReference>